<gene>
    <name evidence="1" type="primary">rsgA</name>
    <name type="ordered locus">BF0688</name>
</gene>
<feature type="chain" id="PRO_1000188032" description="Small ribosomal subunit biogenesis GTPase RsgA">
    <location>
        <begin position="1"/>
        <end position="310"/>
    </location>
</feature>
<feature type="domain" description="CP-type G" evidence="2">
    <location>
        <begin position="77"/>
        <end position="238"/>
    </location>
</feature>
<feature type="binding site" evidence="1">
    <location>
        <begin position="126"/>
        <end position="129"/>
    </location>
    <ligand>
        <name>GTP</name>
        <dbReference type="ChEBI" id="CHEBI:37565"/>
    </ligand>
</feature>
<feature type="binding site" evidence="1">
    <location>
        <begin position="180"/>
        <end position="188"/>
    </location>
    <ligand>
        <name>GTP</name>
        <dbReference type="ChEBI" id="CHEBI:37565"/>
    </ligand>
</feature>
<feature type="binding site" evidence="1">
    <location>
        <position position="262"/>
    </location>
    <ligand>
        <name>Zn(2+)</name>
        <dbReference type="ChEBI" id="CHEBI:29105"/>
    </ligand>
</feature>
<feature type="binding site" evidence="1">
    <location>
        <position position="267"/>
    </location>
    <ligand>
        <name>Zn(2+)</name>
        <dbReference type="ChEBI" id="CHEBI:29105"/>
    </ligand>
</feature>
<feature type="binding site" evidence="1">
    <location>
        <position position="269"/>
    </location>
    <ligand>
        <name>Zn(2+)</name>
        <dbReference type="ChEBI" id="CHEBI:29105"/>
    </ligand>
</feature>
<feature type="binding site" evidence="1">
    <location>
        <position position="275"/>
    </location>
    <ligand>
        <name>Zn(2+)</name>
        <dbReference type="ChEBI" id="CHEBI:29105"/>
    </ligand>
</feature>
<reference key="1">
    <citation type="journal article" date="2004" name="Proc. Natl. Acad. Sci. U.S.A.">
        <title>Genomic analysis of Bacteroides fragilis reveals extensive DNA inversions regulating cell surface adaptation.</title>
        <authorList>
            <person name="Kuwahara T."/>
            <person name="Yamashita A."/>
            <person name="Hirakawa H."/>
            <person name="Nakayama H."/>
            <person name="Toh H."/>
            <person name="Okada N."/>
            <person name="Kuhara S."/>
            <person name="Hattori M."/>
            <person name="Hayashi T."/>
            <person name="Ohnishi Y."/>
        </authorList>
    </citation>
    <scope>NUCLEOTIDE SEQUENCE [LARGE SCALE GENOMIC DNA]</scope>
    <source>
        <strain>YCH46</strain>
    </source>
</reference>
<keyword id="KW-0963">Cytoplasm</keyword>
<keyword id="KW-0342">GTP-binding</keyword>
<keyword id="KW-0378">Hydrolase</keyword>
<keyword id="KW-0479">Metal-binding</keyword>
<keyword id="KW-0547">Nucleotide-binding</keyword>
<keyword id="KW-0690">Ribosome biogenesis</keyword>
<keyword id="KW-0694">RNA-binding</keyword>
<keyword id="KW-0699">rRNA-binding</keyword>
<keyword id="KW-0862">Zinc</keyword>
<protein>
    <recommendedName>
        <fullName evidence="1">Small ribosomal subunit biogenesis GTPase RsgA</fullName>
        <ecNumber evidence="1">3.6.1.-</ecNumber>
    </recommendedName>
</protein>
<proteinExistence type="inferred from homology"/>
<dbReference type="EC" id="3.6.1.-" evidence="1"/>
<dbReference type="EMBL" id="AP006841">
    <property type="protein sequence ID" value="BAD47435.1"/>
    <property type="molecule type" value="Genomic_DNA"/>
</dbReference>
<dbReference type="RefSeq" id="WP_011202106.1">
    <property type="nucleotide sequence ID" value="NC_006347.1"/>
</dbReference>
<dbReference type="RefSeq" id="YP_097969.1">
    <property type="nucleotide sequence ID" value="NC_006347.1"/>
</dbReference>
<dbReference type="SMR" id="Q64YJ1"/>
<dbReference type="STRING" id="295405.BF0688"/>
<dbReference type="KEGG" id="bfr:BF0688"/>
<dbReference type="PATRIC" id="fig|295405.11.peg.696"/>
<dbReference type="HOGENOM" id="CLU_033617_2_0_10"/>
<dbReference type="OrthoDB" id="9809485at2"/>
<dbReference type="Proteomes" id="UP000002197">
    <property type="component" value="Chromosome"/>
</dbReference>
<dbReference type="GO" id="GO:0005737">
    <property type="term" value="C:cytoplasm"/>
    <property type="evidence" value="ECO:0007669"/>
    <property type="project" value="UniProtKB-SubCell"/>
</dbReference>
<dbReference type="GO" id="GO:0005525">
    <property type="term" value="F:GTP binding"/>
    <property type="evidence" value="ECO:0007669"/>
    <property type="project" value="UniProtKB-UniRule"/>
</dbReference>
<dbReference type="GO" id="GO:0003924">
    <property type="term" value="F:GTPase activity"/>
    <property type="evidence" value="ECO:0007669"/>
    <property type="project" value="UniProtKB-UniRule"/>
</dbReference>
<dbReference type="GO" id="GO:0046872">
    <property type="term" value="F:metal ion binding"/>
    <property type="evidence" value="ECO:0007669"/>
    <property type="project" value="UniProtKB-KW"/>
</dbReference>
<dbReference type="GO" id="GO:0019843">
    <property type="term" value="F:rRNA binding"/>
    <property type="evidence" value="ECO:0007669"/>
    <property type="project" value="UniProtKB-KW"/>
</dbReference>
<dbReference type="GO" id="GO:0042274">
    <property type="term" value="P:ribosomal small subunit biogenesis"/>
    <property type="evidence" value="ECO:0007669"/>
    <property type="project" value="UniProtKB-UniRule"/>
</dbReference>
<dbReference type="CDD" id="cd04466">
    <property type="entry name" value="S1_YloQ_GTPase"/>
    <property type="match status" value="1"/>
</dbReference>
<dbReference type="CDD" id="cd01854">
    <property type="entry name" value="YjeQ_EngC"/>
    <property type="match status" value="1"/>
</dbReference>
<dbReference type="Gene3D" id="2.40.50.140">
    <property type="entry name" value="Nucleic acid-binding proteins"/>
    <property type="match status" value="1"/>
</dbReference>
<dbReference type="Gene3D" id="3.40.50.300">
    <property type="entry name" value="P-loop containing nucleotide triphosphate hydrolases"/>
    <property type="match status" value="1"/>
</dbReference>
<dbReference type="Gene3D" id="1.10.40.50">
    <property type="entry name" value="Probable gtpase engc, domain 3"/>
    <property type="match status" value="1"/>
</dbReference>
<dbReference type="HAMAP" id="MF_01820">
    <property type="entry name" value="GTPase_RsgA"/>
    <property type="match status" value="1"/>
</dbReference>
<dbReference type="InterPro" id="IPR030378">
    <property type="entry name" value="G_CP_dom"/>
</dbReference>
<dbReference type="InterPro" id="IPR012340">
    <property type="entry name" value="NA-bd_OB-fold"/>
</dbReference>
<dbReference type="InterPro" id="IPR027417">
    <property type="entry name" value="P-loop_NTPase"/>
</dbReference>
<dbReference type="InterPro" id="IPR004881">
    <property type="entry name" value="Ribosome_biogen_GTPase_RsgA"/>
</dbReference>
<dbReference type="InterPro" id="IPR010914">
    <property type="entry name" value="RsgA_GTPase_dom"/>
</dbReference>
<dbReference type="InterPro" id="IPR031944">
    <property type="entry name" value="RsgA_N"/>
</dbReference>
<dbReference type="NCBIfam" id="TIGR00157">
    <property type="entry name" value="ribosome small subunit-dependent GTPase A"/>
    <property type="match status" value="1"/>
</dbReference>
<dbReference type="PANTHER" id="PTHR32120">
    <property type="entry name" value="SMALL RIBOSOMAL SUBUNIT BIOGENESIS GTPASE RSGA"/>
    <property type="match status" value="1"/>
</dbReference>
<dbReference type="PANTHER" id="PTHR32120:SF11">
    <property type="entry name" value="SMALL RIBOSOMAL SUBUNIT BIOGENESIS GTPASE RSGA 1, MITOCHONDRIAL-RELATED"/>
    <property type="match status" value="1"/>
</dbReference>
<dbReference type="Pfam" id="PF03193">
    <property type="entry name" value="RsgA_GTPase"/>
    <property type="match status" value="1"/>
</dbReference>
<dbReference type="Pfam" id="PF16745">
    <property type="entry name" value="RsgA_N"/>
    <property type="match status" value="1"/>
</dbReference>
<dbReference type="SUPFAM" id="SSF50249">
    <property type="entry name" value="Nucleic acid-binding proteins"/>
    <property type="match status" value="1"/>
</dbReference>
<dbReference type="SUPFAM" id="SSF52540">
    <property type="entry name" value="P-loop containing nucleoside triphosphate hydrolases"/>
    <property type="match status" value="1"/>
</dbReference>
<dbReference type="PROSITE" id="PS50936">
    <property type="entry name" value="ENGC_GTPASE"/>
    <property type="match status" value="1"/>
</dbReference>
<dbReference type="PROSITE" id="PS51721">
    <property type="entry name" value="G_CP"/>
    <property type="match status" value="1"/>
</dbReference>
<comment type="function">
    <text evidence="1">One of several proteins that assist in the late maturation steps of the functional core of the 30S ribosomal subunit. Helps release RbfA from mature subunits. May play a role in the assembly of ribosomal proteins into the subunit. Circularly permuted GTPase that catalyzes slow GTP hydrolysis, GTPase activity is stimulated by the 30S ribosomal subunit.</text>
</comment>
<comment type="cofactor">
    <cofactor evidence="1">
        <name>Zn(2+)</name>
        <dbReference type="ChEBI" id="CHEBI:29105"/>
    </cofactor>
    <text evidence="1">Binds 1 zinc ion per subunit.</text>
</comment>
<comment type="subunit">
    <text evidence="1">Monomer. Associates with 30S ribosomal subunit, binds 16S rRNA.</text>
</comment>
<comment type="subcellular location">
    <subcellularLocation>
        <location evidence="1">Cytoplasm</location>
    </subcellularLocation>
</comment>
<comment type="similarity">
    <text evidence="1">Belongs to the TRAFAC class YlqF/YawG GTPase family. RsgA subfamily.</text>
</comment>
<evidence type="ECO:0000255" key="1">
    <source>
        <dbReference type="HAMAP-Rule" id="MF_01820"/>
    </source>
</evidence>
<evidence type="ECO:0000255" key="2">
    <source>
        <dbReference type="PROSITE-ProRule" id="PRU01058"/>
    </source>
</evidence>
<name>RSGA_BACFR</name>
<accession>Q64YJ1</accession>
<sequence length="310" mass="34812">MKGLVIKNTGSWYQVKTDNGQLVECKIKGNFRLKGIRSTNPVAVGDRVQIILNQEGTAFISEIEDRKNYIIRRSSNLSKQSHILAANLDQCMLVVTVNYPETSTTFIDRFLASAEAYRVPVKILFNKVDAYDEDELHYLDSLITLYTQIGYPCFKISALTGEGVDTIREELKGRVTLFSGHSGVGKSTLINALVPGLEVKTAEISAYHNKGMHTTTFSEMFPVPGDGYIIDTPGIKGFGTFDMEEEEIGHYFPEIFKTSANCKYGNCTHRQEPGCAVRKAVEEHYISESRYTSYLSMLEDKEEGKYRAAY</sequence>
<organism>
    <name type="scientific">Bacteroides fragilis (strain YCH46)</name>
    <dbReference type="NCBI Taxonomy" id="295405"/>
    <lineage>
        <taxon>Bacteria</taxon>
        <taxon>Pseudomonadati</taxon>
        <taxon>Bacteroidota</taxon>
        <taxon>Bacteroidia</taxon>
        <taxon>Bacteroidales</taxon>
        <taxon>Bacteroidaceae</taxon>
        <taxon>Bacteroides</taxon>
    </lineage>
</organism>